<accession>P0DUQ6</accession>
<organism>
    <name type="scientific">Conus planorbis</name>
    <name type="common">Planorbis cone</name>
    <dbReference type="NCBI Taxonomy" id="97183"/>
    <lineage>
        <taxon>Eukaryota</taxon>
        <taxon>Metazoa</taxon>
        <taxon>Spiralia</taxon>
        <taxon>Lophotrochozoa</taxon>
        <taxon>Mollusca</taxon>
        <taxon>Gastropoda</taxon>
        <taxon>Caenogastropoda</taxon>
        <taxon>Neogastropoda</taxon>
        <taxon>Conoidea</taxon>
        <taxon>Conidae</taxon>
        <taxon>Conus</taxon>
        <taxon>Strategoconus</taxon>
    </lineage>
</organism>
<protein>
    <recommendedName>
        <fullName evidence="3">Conotoxin Pl171</fullName>
    </recommendedName>
</protein>
<proteinExistence type="evidence at protein level"/>
<evidence type="ECO:0000250" key="1">
    <source>
        <dbReference type="UniProtKB" id="P69657"/>
    </source>
</evidence>
<evidence type="ECO:0000269" key="2">
    <source>
    </source>
</evidence>
<evidence type="ECO:0000303" key="3">
    <source>
    </source>
</evidence>
<evidence type="ECO:0000305" key="4"/>
<evidence type="ECO:0000305" key="5">
    <source>
    </source>
</evidence>
<name>CA171_CONPO</name>
<feature type="signal peptide" evidence="2">
    <location>
        <begin position="1"/>
        <end position="21"/>
    </location>
</feature>
<feature type="chain" id="PRO_0000453214" description="Conotoxin Pl171" evidence="2">
    <location>
        <begin position="22"/>
        <end position="69"/>
    </location>
</feature>
<feature type="modified residue" description="Phenylalanine amide" evidence="2">
    <location>
        <position position="69"/>
    </location>
</feature>
<feature type="disulfide bond" evidence="1">
    <location>
        <begin position="54"/>
        <end position="61"/>
    </location>
</feature>
<feature type="disulfide bond" evidence="1">
    <location>
        <begin position="55"/>
        <end position="67"/>
    </location>
</feature>
<sequence length="70" mass="7787">MGMRMMFTMILLVVLVTTVVSFTLDRVLGPVSDGRNAAPDDEKFDRMEYFLSKCCANPSTCDLSLLCIFG</sequence>
<reference key="1">
    <citation type="journal article" date="2015" name="Proteomics">
        <title>Transcriptome and proteome of Conus planorbis identify the nicotinic receptors as primary target for the defensive venom.</title>
        <authorList>
            <person name="Jin A.H."/>
            <person name="Vetter I."/>
            <person name="Himaya S.W."/>
            <person name="Alewood P.F."/>
            <person name="Lewis R.J."/>
            <person name="Dutertre S."/>
        </authorList>
    </citation>
    <scope>NUCLEOTIDE SEQUENCE [MRNA]</scope>
    <scope>PROTEIN SEQUENCE OF 22-69</scope>
    <scope>SUBCELLULAR LOCATION</scope>
    <scope>AMIDATION AT PHE-69</scope>
    <source>
        <tissue>Venom</tissue>
        <tissue>Venom duct</tissue>
    </source>
</reference>
<comment type="function">
    <text evidence="4">Probable neurotoxin with unknown target. Possibly targets ion channels.</text>
</comment>
<comment type="subcellular location">
    <subcellularLocation>
        <location evidence="2">Secreted</location>
    </subcellularLocation>
</comment>
<comment type="tissue specificity">
    <text evidence="5">Expressed by the venom duct.</text>
</comment>
<comment type="domain">
    <text evidence="4">The cysteine framework is I (CC-C-C). Alpha5/5 pattern.</text>
</comment>
<comment type="similarity">
    <text evidence="4">Belongs to the conotoxin A superfamily.</text>
</comment>
<keyword id="KW-0027">Amidation</keyword>
<keyword id="KW-0903">Direct protein sequencing</keyword>
<keyword id="KW-1015">Disulfide bond</keyword>
<keyword id="KW-0872">Ion channel impairing toxin</keyword>
<keyword id="KW-0528">Neurotoxin</keyword>
<keyword id="KW-0964">Secreted</keyword>
<keyword id="KW-0732">Signal</keyword>
<keyword id="KW-0800">Toxin</keyword>
<dbReference type="GO" id="GO:0005576">
    <property type="term" value="C:extracellular region"/>
    <property type="evidence" value="ECO:0007669"/>
    <property type="project" value="UniProtKB-SubCell"/>
</dbReference>
<dbReference type="GO" id="GO:0030550">
    <property type="term" value="F:acetylcholine receptor inhibitor activity"/>
    <property type="evidence" value="ECO:0007669"/>
    <property type="project" value="InterPro"/>
</dbReference>
<dbReference type="GO" id="GO:0099106">
    <property type="term" value="F:ion channel regulator activity"/>
    <property type="evidence" value="ECO:0007669"/>
    <property type="project" value="UniProtKB-KW"/>
</dbReference>
<dbReference type="GO" id="GO:0090729">
    <property type="term" value="F:toxin activity"/>
    <property type="evidence" value="ECO:0007669"/>
    <property type="project" value="UniProtKB-KW"/>
</dbReference>
<dbReference type="InterPro" id="IPR009958">
    <property type="entry name" value="Conotoxin_a-typ"/>
</dbReference>
<dbReference type="Pfam" id="PF07365">
    <property type="entry name" value="Toxin_8"/>
    <property type="match status" value="1"/>
</dbReference>